<proteinExistence type="inferred from homology"/>
<gene>
    <name evidence="1" type="primary">rpmA</name>
    <name type="ordered locus">VF_0279</name>
</gene>
<keyword id="KW-1185">Reference proteome</keyword>
<keyword id="KW-0687">Ribonucleoprotein</keyword>
<keyword id="KW-0689">Ribosomal protein</keyword>
<comment type="similarity">
    <text evidence="1">Belongs to the bacterial ribosomal protein bL27 family.</text>
</comment>
<organism>
    <name type="scientific">Aliivibrio fischeri (strain ATCC 700601 / ES114)</name>
    <name type="common">Vibrio fischeri</name>
    <dbReference type="NCBI Taxonomy" id="312309"/>
    <lineage>
        <taxon>Bacteria</taxon>
        <taxon>Pseudomonadati</taxon>
        <taxon>Pseudomonadota</taxon>
        <taxon>Gammaproteobacteria</taxon>
        <taxon>Vibrionales</taxon>
        <taxon>Vibrionaceae</taxon>
        <taxon>Aliivibrio</taxon>
    </lineage>
</organism>
<reference key="1">
    <citation type="journal article" date="2005" name="Proc. Natl. Acad. Sci. U.S.A.">
        <title>Complete genome sequence of Vibrio fischeri: a symbiotic bacterium with pathogenic congeners.</title>
        <authorList>
            <person name="Ruby E.G."/>
            <person name="Urbanowski M."/>
            <person name="Campbell J."/>
            <person name="Dunn A."/>
            <person name="Faini M."/>
            <person name="Gunsalus R."/>
            <person name="Lostroh P."/>
            <person name="Lupp C."/>
            <person name="McCann J."/>
            <person name="Millikan D."/>
            <person name="Schaefer A."/>
            <person name="Stabb E."/>
            <person name="Stevens A."/>
            <person name="Visick K."/>
            <person name="Whistler C."/>
            <person name="Greenberg E.P."/>
        </authorList>
    </citation>
    <scope>NUCLEOTIDE SEQUENCE [LARGE SCALE GENOMIC DNA]</scope>
    <source>
        <strain>ATCC 700601 / ES114</strain>
    </source>
</reference>
<evidence type="ECO:0000255" key="1">
    <source>
        <dbReference type="HAMAP-Rule" id="MF_00539"/>
    </source>
</evidence>
<evidence type="ECO:0000256" key="2">
    <source>
        <dbReference type="SAM" id="MobiDB-lite"/>
    </source>
</evidence>
<evidence type="ECO:0000305" key="3"/>
<dbReference type="EMBL" id="CP000020">
    <property type="protein sequence ID" value="AAW84774.1"/>
    <property type="molecule type" value="Genomic_DNA"/>
</dbReference>
<dbReference type="RefSeq" id="WP_005417307.1">
    <property type="nucleotide sequence ID" value="NZ_CAWLES010000001.1"/>
</dbReference>
<dbReference type="RefSeq" id="YP_203662.1">
    <property type="nucleotide sequence ID" value="NC_006840.2"/>
</dbReference>
<dbReference type="SMR" id="Q5E872"/>
<dbReference type="STRING" id="312309.VF_0279"/>
<dbReference type="EnsemblBacteria" id="AAW84774">
    <property type="protein sequence ID" value="AAW84774"/>
    <property type="gene ID" value="VF_0279"/>
</dbReference>
<dbReference type="GeneID" id="56276413"/>
<dbReference type="KEGG" id="vfi:VF_0279"/>
<dbReference type="PATRIC" id="fig|312309.11.peg.274"/>
<dbReference type="eggNOG" id="COG0211">
    <property type="taxonomic scope" value="Bacteria"/>
</dbReference>
<dbReference type="HOGENOM" id="CLU_095424_4_1_6"/>
<dbReference type="OrthoDB" id="9803474at2"/>
<dbReference type="Proteomes" id="UP000000537">
    <property type="component" value="Chromosome I"/>
</dbReference>
<dbReference type="GO" id="GO:0022625">
    <property type="term" value="C:cytosolic large ribosomal subunit"/>
    <property type="evidence" value="ECO:0007669"/>
    <property type="project" value="TreeGrafter"/>
</dbReference>
<dbReference type="GO" id="GO:0003735">
    <property type="term" value="F:structural constituent of ribosome"/>
    <property type="evidence" value="ECO:0007669"/>
    <property type="project" value="InterPro"/>
</dbReference>
<dbReference type="GO" id="GO:0006412">
    <property type="term" value="P:translation"/>
    <property type="evidence" value="ECO:0007669"/>
    <property type="project" value="UniProtKB-UniRule"/>
</dbReference>
<dbReference type="FunFam" id="2.40.50.100:FF:000001">
    <property type="entry name" value="50S ribosomal protein L27"/>
    <property type="match status" value="1"/>
</dbReference>
<dbReference type="Gene3D" id="2.40.50.100">
    <property type="match status" value="1"/>
</dbReference>
<dbReference type="HAMAP" id="MF_00539">
    <property type="entry name" value="Ribosomal_bL27"/>
    <property type="match status" value="1"/>
</dbReference>
<dbReference type="InterPro" id="IPR001684">
    <property type="entry name" value="Ribosomal_bL27"/>
</dbReference>
<dbReference type="InterPro" id="IPR018261">
    <property type="entry name" value="Ribosomal_bL27_CS"/>
</dbReference>
<dbReference type="NCBIfam" id="TIGR00062">
    <property type="entry name" value="L27"/>
    <property type="match status" value="1"/>
</dbReference>
<dbReference type="PANTHER" id="PTHR15893:SF0">
    <property type="entry name" value="LARGE RIBOSOMAL SUBUNIT PROTEIN BL27M"/>
    <property type="match status" value="1"/>
</dbReference>
<dbReference type="PANTHER" id="PTHR15893">
    <property type="entry name" value="RIBOSOMAL PROTEIN L27"/>
    <property type="match status" value="1"/>
</dbReference>
<dbReference type="Pfam" id="PF01016">
    <property type="entry name" value="Ribosomal_L27"/>
    <property type="match status" value="1"/>
</dbReference>
<dbReference type="PRINTS" id="PR00063">
    <property type="entry name" value="RIBOSOMALL27"/>
</dbReference>
<dbReference type="SUPFAM" id="SSF110324">
    <property type="entry name" value="Ribosomal L27 protein-like"/>
    <property type="match status" value="1"/>
</dbReference>
<dbReference type="PROSITE" id="PS00831">
    <property type="entry name" value="RIBOSOMAL_L27"/>
    <property type="match status" value="1"/>
</dbReference>
<accession>Q5E872</accession>
<name>RL27_ALIF1</name>
<feature type="chain" id="PRO_0000181202" description="Large ribosomal subunit protein bL27">
    <location>
        <begin position="1"/>
        <end position="85"/>
    </location>
</feature>
<feature type="region of interest" description="Disordered" evidence="2">
    <location>
        <begin position="1"/>
        <end position="22"/>
    </location>
</feature>
<protein>
    <recommendedName>
        <fullName evidence="1">Large ribosomal subunit protein bL27</fullName>
    </recommendedName>
    <alternativeName>
        <fullName evidence="3">50S ribosomal protein L27</fullName>
    </alternativeName>
</protein>
<sequence length="85" mass="9181">MAHKKAGGSTRNGRDSESKRLGVKRFGGESVLAGNIIVRQRGTKFHAGTNVGIGKDHTLFALSEGKVKFEVKGPKNRKFVSIEAE</sequence>